<accession>B7LKQ5</accession>
<comment type="function">
    <text evidence="1">Removes 5-oxoproline from various penultimate amino acid residues except L-proline.</text>
</comment>
<comment type="catalytic activity">
    <reaction evidence="1">
        <text>Release of an N-terminal pyroglutamyl group from a polypeptide, the second amino acid generally not being Pro.</text>
        <dbReference type="EC" id="3.4.19.3"/>
    </reaction>
</comment>
<comment type="subunit">
    <text evidence="1">Homotetramer.</text>
</comment>
<comment type="subcellular location">
    <subcellularLocation>
        <location evidence="1">Cytoplasm</location>
    </subcellularLocation>
</comment>
<comment type="similarity">
    <text evidence="1">Belongs to the peptidase C15 family.</text>
</comment>
<dbReference type="EC" id="3.4.19.3" evidence="1"/>
<dbReference type="EMBL" id="CU928158">
    <property type="protein sequence ID" value="CAQ89900.1"/>
    <property type="molecule type" value="Genomic_DNA"/>
</dbReference>
<dbReference type="RefSeq" id="WP_000859694.1">
    <property type="nucleotide sequence ID" value="NC_011740.1"/>
</dbReference>
<dbReference type="SMR" id="B7LKQ5"/>
<dbReference type="MEROPS" id="C15.001"/>
<dbReference type="GeneID" id="75056567"/>
<dbReference type="KEGG" id="efe:EFER_2401"/>
<dbReference type="HOGENOM" id="CLU_043960_4_0_6"/>
<dbReference type="OrthoDB" id="9779738at2"/>
<dbReference type="Proteomes" id="UP000000745">
    <property type="component" value="Chromosome"/>
</dbReference>
<dbReference type="GO" id="GO:0005829">
    <property type="term" value="C:cytosol"/>
    <property type="evidence" value="ECO:0007669"/>
    <property type="project" value="InterPro"/>
</dbReference>
<dbReference type="GO" id="GO:0016920">
    <property type="term" value="F:pyroglutamyl-peptidase activity"/>
    <property type="evidence" value="ECO:0007669"/>
    <property type="project" value="UniProtKB-UniRule"/>
</dbReference>
<dbReference type="GO" id="GO:0006508">
    <property type="term" value="P:proteolysis"/>
    <property type="evidence" value="ECO:0007669"/>
    <property type="project" value="UniProtKB-KW"/>
</dbReference>
<dbReference type="CDD" id="cd00501">
    <property type="entry name" value="Peptidase_C15"/>
    <property type="match status" value="1"/>
</dbReference>
<dbReference type="FunFam" id="3.40.630.20:FF:000001">
    <property type="entry name" value="Pyrrolidone-carboxylate peptidase"/>
    <property type="match status" value="1"/>
</dbReference>
<dbReference type="Gene3D" id="3.40.630.20">
    <property type="entry name" value="Peptidase C15, pyroglutamyl peptidase I-like"/>
    <property type="match status" value="1"/>
</dbReference>
<dbReference type="HAMAP" id="MF_00417">
    <property type="entry name" value="Pyrrolid_peptidase"/>
    <property type="match status" value="1"/>
</dbReference>
<dbReference type="InterPro" id="IPR000816">
    <property type="entry name" value="Peptidase_C15"/>
</dbReference>
<dbReference type="InterPro" id="IPR016125">
    <property type="entry name" value="Peptidase_C15-like"/>
</dbReference>
<dbReference type="InterPro" id="IPR036440">
    <property type="entry name" value="Peptidase_C15-like_sf"/>
</dbReference>
<dbReference type="InterPro" id="IPR029762">
    <property type="entry name" value="PGP-I_bact-type"/>
</dbReference>
<dbReference type="InterPro" id="IPR033694">
    <property type="entry name" value="PGPEP1_Cys_AS"/>
</dbReference>
<dbReference type="InterPro" id="IPR033693">
    <property type="entry name" value="PGPEP1_Glu_AS"/>
</dbReference>
<dbReference type="NCBIfam" id="NF009676">
    <property type="entry name" value="PRK13197.1"/>
    <property type="match status" value="1"/>
</dbReference>
<dbReference type="NCBIfam" id="TIGR00504">
    <property type="entry name" value="pyro_pdase"/>
    <property type="match status" value="1"/>
</dbReference>
<dbReference type="PANTHER" id="PTHR23402">
    <property type="entry name" value="PROTEASE FAMILY C15 PYROGLUTAMYL-PEPTIDASE I-RELATED"/>
    <property type="match status" value="1"/>
</dbReference>
<dbReference type="PANTHER" id="PTHR23402:SF1">
    <property type="entry name" value="PYROGLUTAMYL-PEPTIDASE I"/>
    <property type="match status" value="1"/>
</dbReference>
<dbReference type="Pfam" id="PF01470">
    <property type="entry name" value="Peptidase_C15"/>
    <property type="match status" value="1"/>
</dbReference>
<dbReference type="PIRSF" id="PIRSF015592">
    <property type="entry name" value="Prld-crbxl_pptds"/>
    <property type="match status" value="1"/>
</dbReference>
<dbReference type="PRINTS" id="PR00706">
    <property type="entry name" value="PYROGLUPTASE"/>
</dbReference>
<dbReference type="SUPFAM" id="SSF53182">
    <property type="entry name" value="Pyrrolidone carboxyl peptidase (pyroglutamate aminopeptidase)"/>
    <property type="match status" value="1"/>
</dbReference>
<dbReference type="PROSITE" id="PS01334">
    <property type="entry name" value="PYRASE_CYS"/>
    <property type="match status" value="1"/>
</dbReference>
<dbReference type="PROSITE" id="PS01333">
    <property type="entry name" value="PYRASE_GLU"/>
    <property type="match status" value="1"/>
</dbReference>
<organism>
    <name type="scientific">Escherichia fergusonii (strain ATCC 35469 / DSM 13698 / CCUG 18766 / IAM 14443 / JCM 21226 / LMG 7866 / NBRC 102419 / NCTC 12128 / CDC 0568-73)</name>
    <dbReference type="NCBI Taxonomy" id="585054"/>
    <lineage>
        <taxon>Bacteria</taxon>
        <taxon>Pseudomonadati</taxon>
        <taxon>Pseudomonadota</taxon>
        <taxon>Gammaproteobacteria</taxon>
        <taxon>Enterobacterales</taxon>
        <taxon>Enterobacteriaceae</taxon>
        <taxon>Escherichia</taxon>
    </lineage>
</organism>
<feature type="chain" id="PRO_1000123996" description="Pyrrolidone-carboxylate peptidase">
    <location>
        <begin position="1"/>
        <end position="214"/>
    </location>
</feature>
<feature type="active site" evidence="1">
    <location>
        <position position="80"/>
    </location>
</feature>
<feature type="active site" evidence="1">
    <location>
        <position position="143"/>
    </location>
</feature>
<feature type="active site" evidence="1">
    <location>
        <position position="166"/>
    </location>
</feature>
<reference key="1">
    <citation type="journal article" date="2009" name="PLoS Genet.">
        <title>Organised genome dynamics in the Escherichia coli species results in highly diverse adaptive paths.</title>
        <authorList>
            <person name="Touchon M."/>
            <person name="Hoede C."/>
            <person name="Tenaillon O."/>
            <person name="Barbe V."/>
            <person name="Baeriswyl S."/>
            <person name="Bidet P."/>
            <person name="Bingen E."/>
            <person name="Bonacorsi S."/>
            <person name="Bouchier C."/>
            <person name="Bouvet O."/>
            <person name="Calteau A."/>
            <person name="Chiapello H."/>
            <person name="Clermont O."/>
            <person name="Cruveiller S."/>
            <person name="Danchin A."/>
            <person name="Diard M."/>
            <person name="Dossat C."/>
            <person name="Karoui M.E."/>
            <person name="Frapy E."/>
            <person name="Garry L."/>
            <person name="Ghigo J.M."/>
            <person name="Gilles A.M."/>
            <person name="Johnson J."/>
            <person name="Le Bouguenec C."/>
            <person name="Lescat M."/>
            <person name="Mangenot S."/>
            <person name="Martinez-Jehanne V."/>
            <person name="Matic I."/>
            <person name="Nassif X."/>
            <person name="Oztas S."/>
            <person name="Petit M.A."/>
            <person name="Pichon C."/>
            <person name="Rouy Z."/>
            <person name="Ruf C.S."/>
            <person name="Schneider D."/>
            <person name="Tourret J."/>
            <person name="Vacherie B."/>
            <person name="Vallenet D."/>
            <person name="Medigue C."/>
            <person name="Rocha E.P.C."/>
            <person name="Denamur E."/>
        </authorList>
    </citation>
    <scope>NUCLEOTIDE SEQUENCE [LARGE SCALE GENOMIC DNA]</scope>
    <source>
        <strain>ATCC 35469 / DSM 13698 / BCRC 15582 / CCUG 18766 / IAM 14443 / JCM 21226 / LMG 7866 / NBRC 102419 / NCTC 12128 / CDC 0568-73</strain>
    </source>
</reference>
<protein>
    <recommendedName>
        <fullName evidence="1">Pyrrolidone-carboxylate peptidase</fullName>
        <ecNumber evidence="1">3.4.19.3</ecNumber>
    </recommendedName>
    <alternativeName>
        <fullName evidence="1">5-oxoprolyl-peptidase</fullName>
    </alternativeName>
    <alternativeName>
        <fullName evidence="1">Pyroglutamyl-peptidase I</fullName>
        <shortName evidence="1">PGP-I</shortName>
        <shortName evidence="1">Pyrase</shortName>
    </alternativeName>
</protein>
<keyword id="KW-0963">Cytoplasm</keyword>
<keyword id="KW-0378">Hydrolase</keyword>
<keyword id="KW-0645">Protease</keyword>
<keyword id="KW-0788">Thiol protease</keyword>
<sequence>MKTVLITGFEPFGGEQINPSWEVVSQLDNAILGGCRVVARQLPCVFGESLAVLNSAIDALSPSVVLAVGQAGGRTDITVERVAINVDDARIPDNRGNQPVDVPVIPNGPAAWFSTLPIKAMVSAIREAGIPASVSQTAGTFVCNHVMYGLLHKLSSMADVKGGFIHIPYLPQQAAAHPGAPSMAADTVRRALETAIITALYVDADIIVAGGATH</sequence>
<evidence type="ECO:0000255" key="1">
    <source>
        <dbReference type="HAMAP-Rule" id="MF_00417"/>
    </source>
</evidence>
<proteinExistence type="inferred from homology"/>
<name>PCP_ESCF3</name>
<gene>
    <name evidence="1" type="primary">pcp</name>
    <name type="ordered locus">EFER_2401</name>
</gene>